<reference key="1">
    <citation type="journal article" date="1998" name="J. Mol. Evol.">
        <title>The complete mitochondrial DNA sequence of the pig (Sus scrofa).</title>
        <authorList>
            <person name="Ursing B.M."/>
            <person name="Arnason U."/>
        </authorList>
    </citation>
    <scope>NUCLEOTIDE SEQUENCE [GENOMIC DNA]</scope>
</reference>
<reference key="2">
    <citation type="journal article" date="1999" name="Gene">
        <title>Complete nucleotide sequence of pig (Sus scrofa) mitochondrial genome and dating evolutionary divergence within artiodactyla.</title>
        <authorList>
            <person name="Lin C.S."/>
            <person name="Sun Y.L."/>
            <person name="Liu C.Y."/>
            <person name="Yang P.C."/>
            <person name="Chang L.C."/>
            <person name="Cheng I.C."/>
            <person name="Mao S.J.T."/>
            <person name="Huang M.C."/>
        </authorList>
    </citation>
    <scope>NUCLEOTIDE SEQUENCE [LARGE SCALE GENOMIC DNA]</scope>
    <source>
        <strain>Landrace</strain>
    </source>
</reference>
<reference key="3">
    <citation type="journal article" date="1986" name="Biochem. Genet.">
        <title>Pig mitochondrial DNA: polymorphism, restriction map orientation, and sequence data.</title>
        <authorList>
            <person name="Watanabe T."/>
            <person name="Hayashi Y."/>
            <person name="Kimura J."/>
            <person name="Yasuda Y."/>
            <person name="Saitou N."/>
            <person name="Tomita T."/>
            <person name="Ogasawara N."/>
        </authorList>
    </citation>
    <scope>NUCLEOTIDE SEQUENCE [GENOMIC DNA] OF 1-37</scope>
</reference>
<comment type="function">
    <text evidence="1">Subunit a, of the mitochondrial membrane ATP synthase complex (F(1)F(0) ATP synthase or Complex V) that produces ATP from ADP in the presence of a proton gradient across the membrane which is generated by electron transport complexes of the respiratory chain. ATP synthase complex consist of a soluble F(1) head domain - the catalytic core - and a membrane F(1) domain - the membrane proton channel. These two domains are linked by a central stalk rotating inside the F(1) region and a stationary peripheral stalk. During catalysis, ATP synthesis in the catalytic domain of F(1) is coupled via a rotary mechanism of the central stalk subunits to proton translocation. With the subunit c (ATP5MC1), forms the proton-conducting channel in the F(0) domain, that contains two crucial half-channels (inlet and outlet) that facilitate proton movement from the mitochondrial intermembrane space (IMS) into the matrix. Protons are taken up via the inlet half-channel and released through the outlet half-channel, following a Grotthuss mechanism.</text>
</comment>
<comment type="catalytic activity">
    <reaction evidence="1">
        <text>H(+)(in) = H(+)(out)</text>
        <dbReference type="Rhea" id="RHEA:34979"/>
        <dbReference type="ChEBI" id="CHEBI:15378"/>
    </reaction>
</comment>
<comment type="subunit">
    <text evidence="1">Component of the ATP synthase complex composed at least of ATP5F1A/subunit alpha, ATP5F1B/subunit beta, ATP5MC1/subunit c (homooctomer), MT-ATP6/subunit a, MT-ATP8/subunit 8, ATP5ME/subunit e, ATP5MF/subunit f, ATP5MG/subunit g, ATP5MK/subunit k, ATP5MJ/subunit j, ATP5F1C/subunit gamma, ATP5F1D/subunit delta, ATP5F1E/subunit epsilon, ATP5PF/subunit F6, ATP5PB/subunit b, ATP5PD/subunit d, ATP5PO/subunit OSCP. ATP synthase complex consists of a soluble F(1) head domain (subunits alpha(3) and beta(3)) - the catalytic core - and a membrane F(0) domain - the membrane proton channel (subunits c, a, 8, e, f, g, k and j). These two domains are linked by a central stalk (subunits gamma, delta, and epsilon) rotating inside the F1 region and a stationary peripheral stalk (subunits F6, b, d, and OSCP). Interacts with DNAJC30; interaction is direct.</text>
</comment>
<comment type="subcellular location">
    <subcellularLocation>
        <location>Mitochondrion inner membrane</location>
        <topology>Multi-pass membrane protein</topology>
    </subcellularLocation>
</comment>
<comment type="similarity">
    <text evidence="3">Belongs to the ATPase A chain family.</text>
</comment>
<gene>
    <name evidence="1" type="primary">MT-ATP6</name>
    <name type="synonym">ATP6</name>
    <name type="synonym">ATPASE6</name>
    <name type="synonym">MTATP6</name>
</gene>
<protein>
    <recommendedName>
        <fullName evidence="1">ATP synthase F(0) complex subunit a</fullName>
    </recommendedName>
    <alternativeName>
        <fullName>F-ATPase protein 6</fullName>
    </alternativeName>
    <alternativeName>
        <fullName evidence="1">Proton-conducting channel, ATP synthase F(0) complex subunit a</fullName>
    </alternativeName>
</protein>
<feature type="chain" id="PRO_0000082154" description="ATP synthase F(0) complex subunit a">
    <location>
        <begin position="1"/>
        <end position="226"/>
    </location>
</feature>
<feature type="transmembrane region" description="Helical" evidence="2">
    <location>
        <begin position="6"/>
        <end position="26"/>
    </location>
</feature>
<feature type="transmembrane region" description="Helical" evidence="2">
    <location>
        <begin position="68"/>
        <end position="88"/>
    </location>
</feature>
<feature type="transmembrane region" description="Helical" evidence="2">
    <location>
        <begin position="97"/>
        <end position="117"/>
    </location>
</feature>
<feature type="transmembrane region" description="Helical" evidence="2">
    <location>
        <begin position="136"/>
        <end position="156"/>
    </location>
</feature>
<feature type="transmembrane region" description="Helical" evidence="2">
    <location>
        <begin position="164"/>
        <end position="184"/>
    </location>
</feature>
<feature type="transmembrane region" description="Helical" evidence="2">
    <location>
        <begin position="189"/>
        <end position="209"/>
    </location>
</feature>
<feature type="sequence conflict" description="In Ref. 3; AAA32031." evidence="3" ref="3">
    <original>LFPTPKRL</original>
    <variation>SLYLHDNT</variation>
    <location>
        <begin position="30"/>
        <end position="37"/>
    </location>
</feature>
<feature type="helix" evidence="4">
    <location>
        <begin position="20"/>
        <end position="23"/>
    </location>
</feature>
<feature type="helix" evidence="4">
    <location>
        <begin position="26"/>
        <end position="28"/>
    </location>
</feature>
<feature type="strand" evidence="4">
    <location>
        <begin position="36"/>
        <end position="38"/>
    </location>
</feature>
<feature type="strand" evidence="4">
    <location>
        <begin position="41"/>
        <end position="43"/>
    </location>
</feature>
<feature type="helix" evidence="4">
    <location>
        <begin position="44"/>
        <end position="53"/>
    </location>
</feature>
<feature type="turn" evidence="4">
    <location>
        <begin position="57"/>
        <end position="61"/>
    </location>
</feature>
<feature type="helix" evidence="4">
    <location>
        <begin position="69"/>
        <end position="72"/>
    </location>
</feature>
<feature type="helix" evidence="4">
    <location>
        <begin position="74"/>
        <end position="81"/>
    </location>
</feature>
<feature type="turn" evidence="4">
    <location>
        <begin position="82"/>
        <end position="84"/>
    </location>
</feature>
<feature type="helix" evidence="4">
    <location>
        <begin position="85"/>
        <end position="87"/>
    </location>
</feature>
<feature type="helix" evidence="4">
    <location>
        <begin position="94"/>
        <end position="96"/>
    </location>
</feature>
<feature type="helix" evidence="4">
    <location>
        <begin position="98"/>
        <end position="101"/>
    </location>
</feature>
<feature type="turn" evidence="4">
    <location>
        <begin position="102"/>
        <end position="104"/>
    </location>
</feature>
<feature type="helix" evidence="4">
    <location>
        <begin position="106"/>
        <end position="116"/>
    </location>
</feature>
<feature type="turn" evidence="4">
    <location>
        <begin position="117"/>
        <end position="120"/>
    </location>
</feature>
<feature type="strand" evidence="4">
    <location>
        <begin position="121"/>
        <end position="124"/>
    </location>
</feature>
<feature type="turn" evidence="4">
    <location>
        <begin position="125"/>
        <end position="128"/>
    </location>
</feature>
<feature type="turn" evidence="4">
    <location>
        <begin position="139"/>
        <end position="150"/>
    </location>
</feature>
<feature type="helix" evidence="4">
    <location>
        <begin position="151"/>
        <end position="179"/>
    </location>
</feature>
<feature type="helix" evidence="4">
    <location>
        <begin position="187"/>
        <end position="201"/>
    </location>
</feature>
<feature type="helix" evidence="4">
    <location>
        <begin position="207"/>
        <end position="221"/>
    </location>
</feature>
<geneLocation type="mitochondrion"/>
<organism>
    <name type="scientific">Sus scrofa</name>
    <name type="common">Pig</name>
    <dbReference type="NCBI Taxonomy" id="9823"/>
    <lineage>
        <taxon>Eukaryota</taxon>
        <taxon>Metazoa</taxon>
        <taxon>Chordata</taxon>
        <taxon>Craniata</taxon>
        <taxon>Vertebrata</taxon>
        <taxon>Euteleostomi</taxon>
        <taxon>Mammalia</taxon>
        <taxon>Eutheria</taxon>
        <taxon>Laurasiatheria</taxon>
        <taxon>Artiodactyla</taxon>
        <taxon>Suina</taxon>
        <taxon>Suidae</taxon>
        <taxon>Sus</taxon>
    </lineage>
</organism>
<sequence length="226" mass="25039">MNENLFASFIAPTMMGLPIVTLIIMFPSLLFPTPKRLINNRTISIQQWLIQLTSKQMMAIHNQKGQTWSLMLMSLIMFIGSTNILGLLPHSFTPTTQLSMNLGMAIPLWSATVFTGFRYKTKTSLAHFLPQGTPALLIPMLVIIETISLFIQPVALAVRLTANITAGHLLIHLIGGATLALLNINTMTAFITFTILILLTILEFAVALIQAYVFTLLVSLYLHDNT</sequence>
<evidence type="ECO:0000250" key="1">
    <source>
        <dbReference type="UniProtKB" id="P00846"/>
    </source>
</evidence>
<evidence type="ECO:0000255" key="2"/>
<evidence type="ECO:0000305" key="3"/>
<evidence type="ECO:0007829" key="4">
    <source>
        <dbReference type="PDB" id="6J5I"/>
    </source>
</evidence>
<dbReference type="EMBL" id="AJ002189">
    <property type="protein sequence ID" value="CAA05234.1"/>
    <property type="molecule type" value="Genomic_DNA"/>
</dbReference>
<dbReference type="EMBL" id="AF034253">
    <property type="protein sequence ID" value="AAD34190.1"/>
    <property type="molecule type" value="Genomic_DNA"/>
</dbReference>
<dbReference type="EMBL" id="M26139">
    <property type="protein sequence ID" value="AAA32031.1"/>
    <property type="molecule type" value="Genomic_DNA"/>
</dbReference>
<dbReference type="PIR" id="T10977">
    <property type="entry name" value="T10977"/>
</dbReference>
<dbReference type="RefSeq" id="NP_008639.1">
    <property type="nucleotide sequence ID" value="NC_000845.1"/>
</dbReference>
<dbReference type="PDB" id="6J54">
    <property type="method" value="EM"/>
    <property type="resolution" value="3.94 A"/>
    <property type="chains" value="a=1-226"/>
</dbReference>
<dbReference type="PDB" id="6J5A">
    <property type="method" value="EM"/>
    <property type="resolution" value="4.35 A"/>
    <property type="chains" value="a=1-226"/>
</dbReference>
<dbReference type="PDB" id="6J5I">
    <property type="method" value="EM"/>
    <property type="resolution" value="3.34 A"/>
    <property type="chains" value="a=1-226"/>
</dbReference>
<dbReference type="PDB" id="6J5J">
    <property type="method" value="EM"/>
    <property type="resolution" value="3.45 A"/>
    <property type="chains" value="a=1-226"/>
</dbReference>
<dbReference type="PDB" id="6J5K">
    <property type="method" value="EM"/>
    <property type="resolution" value="6.20 A"/>
    <property type="chains" value="Aa/Ba/Ca/a=1-226"/>
</dbReference>
<dbReference type="PDB" id="6ZMR">
    <property type="method" value="EM"/>
    <property type="resolution" value="3.94 A"/>
    <property type="chains" value="a=1-226"/>
</dbReference>
<dbReference type="PDB" id="6ZNA">
    <property type="method" value="EM"/>
    <property type="resolution" value="6.20 A"/>
    <property type="chains" value="Aa/Ba/Ca/a=1-226"/>
</dbReference>
<dbReference type="PDBsum" id="6J54"/>
<dbReference type="PDBsum" id="6J5A"/>
<dbReference type="PDBsum" id="6J5I"/>
<dbReference type="PDBsum" id="6J5J"/>
<dbReference type="PDBsum" id="6J5K"/>
<dbReference type="PDBsum" id="6ZMR"/>
<dbReference type="PDBsum" id="6ZNA"/>
<dbReference type="SMR" id="Q35915"/>
<dbReference type="FunCoup" id="Q35915">
    <property type="interactions" value="109"/>
</dbReference>
<dbReference type="IntAct" id="Q35915">
    <property type="interactions" value="2"/>
</dbReference>
<dbReference type="STRING" id="9823.ENSSSCP00000019140"/>
<dbReference type="PaxDb" id="9823-ENSSSCP00000019140"/>
<dbReference type="PeptideAtlas" id="Q35915"/>
<dbReference type="Ensembl" id="ENSSSCT00000019676.1">
    <property type="protein sequence ID" value="ENSSSCP00000019140.1"/>
    <property type="gene ID" value="ENSSSCG00000018081.1"/>
</dbReference>
<dbReference type="Ensembl" id="ENSSSCT00070061678.1">
    <property type="protein sequence ID" value="ENSSSCP00070052583.1"/>
    <property type="gene ID" value="ENSSSCG00070030641.1"/>
</dbReference>
<dbReference type="Ensembl" id="ENSSSCT00085000023">
    <property type="protein sequence ID" value="ENSSSCP00085000007"/>
    <property type="gene ID" value="ENSSSCG00085000023"/>
</dbReference>
<dbReference type="Ensembl" id="ENSSSCT00090000023">
    <property type="protein sequence ID" value="ENSSSCP00090000007"/>
    <property type="gene ID" value="ENSSSCG00090000023"/>
</dbReference>
<dbReference type="Ensembl" id="ENSSSCT00105000023">
    <property type="protein sequence ID" value="ENSSSCP00105000007"/>
    <property type="gene ID" value="ENSSSCG00105000023"/>
</dbReference>
<dbReference type="Ensembl" id="ENSSSCT00110000023">
    <property type="protein sequence ID" value="ENSSSCP00110000007"/>
    <property type="gene ID" value="ENSSSCG00110000023"/>
</dbReference>
<dbReference type="Ensembl" id="ENSSSCT00115000023">
    <property type="protein sequence ID" value="ENSSSCP00115000007"/>
    <property type="gene ID" value="ENSSSCG00115000023"/>
</dbReference>
<dbReference type="Ensembl" id="ENSSSCT00130000023">
    <property type="protein sequence ID" value="ENSSSCP00130000007"/>
    <property type="gene ID" value="ENSSSCG00130000023"/>
</dbReference>
<dbReference type="GeneID" id="808506"/>
<dbReference type="KEGG" id="ssc:808506"/>
<dbReference type="CTD" id="4508"/>
<dbReference type="VGNC" id="VGNC:108745">
    <property type="gene designation" value="MT-ATP6"/>
</dbReference>
<dbReference type="eggNOG" id="KOG4665">
    <property type="taxonomic scope" value="Eukaryota"/>
</dbReference>
<dbReference type="GeneTree" id="ENSGT00390000005568"/>
<dbReference type="HOGENOM" id="CLU_041018_0_2_1"/>
<dbReference type="InParanoid" id="Q35915"/>
<dbReference type="OMA" id="FFDQFMS"/>
<dbReference type="OrthoDB" id="5976622at2759"/>
<dbReference type="TreeFam" id="TF343395"/>
<dbReference type="Reactome" id="R-SSC-163210">
    <property type="pathway name" value="Formation of ATP by chemiosmotic coupling"/>
</dbReference>
<dbReference type="Reactome" id="R-SSC-8949613">
    <property type="pathway name" value="Cristae formation"/>
</dbReference>
<dbReference type="Reactome" id="R-SSC-9837999">
    <property type="pathway name" value="Mitochondrial protein degradation"/>
</dbReference>
<dbReference type="Proteomes" id="UP000008227">
    <property type="component" value="Mitochondrion"/>
</dbReference>
<dbReference type="Proteomes" id="UP000314985">
    <property type="component" value="Mitochondrion"/>
</dbReference>
<dbReference type="Proteomes" id="UP000694570">
    <property type="component" value="Unplaced"/>
</dbReference>
<dbReference type="Proteomes" id="UP000694571">
    <property type="component" value="Unplaced"/>
</dbReference>
<dbReference type="Proteomes" id="UP000694720">
    <property type="component" value="Unplaced"/>
</dbReference>
<dbReference type="Proteomes" id="UP000694722">
    <property type="component" value="Unplaced"/>
</dbReference>
<dbReference type="Proteomes" id="UP000694723">
    <property type="component" value="Unplaced"/>
</dbReference>
<dbReference type="Proteomes" id="UP000694724">
    <property type="component" value="Unplaced"/>
</dbReference>
<dbReference type="Proteomes" id="UP000694725">
    <property type="component" value="Unplaced"/>
</dbReference>
<dbReference type="Proteomes" id="UP000694726">
    <property type="component" value="Unplaced"/>
</dbReference>
<dbReference type="Proteomes" id="UP000694727">
    <property type="component" value="Unplaced"/>
</dbReference>
<dbReference type="Proteomes" id="UP000694728">
    <property type="component" value="Unplaced"/>
</dbReference>
<dbReference type="Bgee" id="ENSSSCG00000018081">
    <property type="expression patterns" value="Expressed in prefrontal cortex and 44 other cell types or tissues"/>
</dbReference>
<dbReference type="ExpressionAtlas" id="Q35915">
    <property type="expression patterns" value="baseline and differential"/>
</dbReference>
<dbReference type="GO" id="GO:0005743">
    <property type="term" value="C:mitochondrial inner membrane"/>
    <property type="evidence" value="ECO:0007669"/>
    <property type="project" value="UniProtKB-SubCell"/>
</dbReference>
<dbReference type="GO" id="GO:0045259">
    <property type="term" value="C:proton-transporting ATP synthase complex"/>
    <property type="evidence" value="ECO:0000250"/>
    <property type="project" value="UniProtKB"/>
</dbReference>
<dbReference type="GO" id="GO:0015252">
    <property type="term" value="F:proton channel activity"/>
    <property type="evidence" value="ECO:0000250"/>
    <property type="project" value="UniProtKB"/>
</dbReference>
<dbReference type="GO" id="GO:0015986">
    <property type="term" value="P:proton motive force-driven ATP synthesis"/>
    <property type="evidence" value="ECO:0000250"/>
    <property type="project" value="UniProtKB"/>
</dbReference>
<dbReference type="GO" id="GO:1902600">
    <property type="term" value="P:proton transmembrane transport"/>
    <property type="evidence" value="ECO:0000250"/>
    <property type="project" value="UniProtKB"/>
</dbReference>
<dbReference type="CDD" id="cd00310">
    <property type="entry name" value="ATP-synt_Fo_a_6"/>
    <property type="match status" value="1"/>
</dbReference>
<dbReference type="FunFam" id="1.20.120.220:FF:000004">
    <property type="entry name" value="ATP synthase subunit a"/>
    <property type="match status" value="1"/>
</dbReference>
<dbReference type="Gene3D" id="1.20.120.220">
    <property type="entry name" value="ATP synthase, F0 complex, subunit A"/>
    <property type="match status" value="1"/>
</dbReference>
<dbReference type="InterPro" id="IPR000568">
    <property type="entry name" value="ATP_synth_F0_asu"/>
</dbReference>
<dbReference type="InterPro" id="IPR023011">
    <property type="entry name" value="ATP_synth_F0_asu_AS"/>
</dbReference>
<dbReference type="InterPro" id="IPR045083">
    <property type="entry name" value="ATP_synth_F0_asu_bact/mt"/>
</dbReference>
<dbReference type="InterPro" id="IPR035908">
    <property type="entry name" value="F0_ATP_A_sf"/>
</dbReference>
<dbReference type="NCBIfam" id="TIGR01131">
    <property type="entry name" value="ATP_synt_6_or_A"/>
    <property type="match status" value="1"/>
</dbReference>
<dbReference type="PANTHER" id="PTHR11410">
    <property type="entry name" value="ATP SYNTHASE SUBUNIT A"/>
    <property type="match status" value="1"/>
</dbReference>
<dbReference type="PANTHER" id="PTHR11410:SF0">
    <property type="entry name" value="ATP SYNTHASE SUBUNIT A"/>
    <property type="match status" value="1"/>
</dbReference>
<dbReference type="Pfam" id="PF00119">
    <property type="entry name" value="ATP-synt_A"/>
    <property type="match status" value="1"/>
</dbReference>
<dbReference type="PRINTS" id="PR00123">
    <property type="entry name" value="ATPASEA"/>
</dbReference>
<dbReference type="SUPFAM" id="SSF81336">
    <property type="entry name" value="F1F0 ATP synthase subunit A"/>
    <property type="match status" value="1"/>
</dbReference>
<dbReference type="PROSITE" id="PS00449">
    <property type="entry name" value="ATPASE_A"/>
    <property type="match status" value="1"/>
</dbReference>
<proteinExistence type="evidence at protein level"/>
<keyword id="KW-0002">3D-structure</keyword>
<keyword id="KW-0066">ATP synthesis</keyword>
<keyword id="KW-0138">CF(0)</keyword>
<keyword id="KW-0375">Hydrogen ion transport</keyword>
<keyword id="KW-0406">Ion transport</keyword>
<keyword id="KW-0472">Membrane</keyword>
<keyword id="KW-0496">Mitochondrion</keyword>
<keyword id="KW-0999">Mitochondrion inner membrane</keyword>
<keyword id="KW-1185">Reference proteome</keyword>
<keyword id="KW-0812">Transmembrane</keyword>
<keyword id="KW-1133">Transmembrane helix</keyword>
<keyword id="KW-0813">Transport</keyword>
<name>ATP6_PIG</name>
<accession>Q35915</accession>
<accession>O79878</accession>